<accession>P0CI23</accession>
<sequence length="11" mass="1301">RCCGYKMCHPC</sequence>
<feature type="peptide" id="PRO_0000402419" description="Chi-conotoxin-like Ar1311" evidence="2">
    <location>
        <begin position="1"/>
        <end position="11"/>
    </location>
</feature>
<feature type="modified residue" description="4-hydroxyproline" evidence="2">
    <location>
        <position position="10"/>
    </location>
</feature>
<feature type="disulfide bond" evidence="2">
    <location>
        <begin position="2"/>
        <end position="11"/>
    </location>
</feature>
<feature type="disulfide bond" evidence="2">
    <location>
        <begin position="3"/>
        <end position="8"/>
    </location>
</feature>
<evidence type="ECO:0000250" key="1">
    <source>
        <dbReference type="UniProtKB" id="P58808"/>
    </source>
</evidence>
<evidence type="ECO:0000269" key="2">
    <source>
    </source>
</evidence>
<evidence type="ECO:0000305" key="3"/>
<evidence type="ECO:0000305" key="4">
    <source>
    </source>
</evidence>
<organism>
    <name type="scientific">Conus araneosus</name>
    <name type="common">Cobweb cone</name>
    <dbReference type="NCBI Taxonomy" id="101286"/>
    <lineage>
        <taxon>Eukaryota</taxon>
        <taxon>Metazoa</taxon>
        <taxon>Spiralia</taxon>
        <taxon>Lophotrochozoa</taxon>
        <taxon>Mollusca</taxon>
        <taxon>Gastropoda</taxon>
        <taxon>Caenogastropoda</taxon>
        <taxon>Neogastropoda</taxon>
        <taxon>Conoidea</taxon>
        <taxon>Conidae</taxon>
        <taxon>Conus</taxon>
    </lineage>
</organism>
<keyword id="KW-0903">Direct protein sequencing</keyword>
<keyword id="KW-1015">Disulfide bond</keyword>
<keyword id="KW-0379">Hydroxylation</keyword>
<keyword id="KW-0528">Neurotoxin</keyword>
<keyword id="KW-0964">Secreted</keyword>
<keyword id="KW-0800">Toxin</keyword>
<proteinExistence type="evidence at protein level"/>
<name>CTA11_CONAO</name>
<reference key="1">
    <citation type="journal article" date="2010" name="Anal. Chem.">
        <title>Disulfide bond assignments by mass spectrometry of native natural peptides: cysteine pairing in disulfide bonded conotoxins.</title>
        <authorList>
            <person name="Gupta K."/>
            <person name="Kumar M."/>
            <person name="Balaram P."/>
        </authorList>
    </citation>
    <scope>PROTEIN SEQUENCE</scope>
    <scope>IDENTIFICATION BY MASS SPECTROMETRY</scope>
    <scope>DISULFIDE BONDS</scope>
    <scope>HYDROXYLATION AT PRO-10</scope>
    <scope>SUBCELLULAR LOCATION</scope>
    <source>
        <tissue>Venom</tissue>
    </source>
</reference>
<dbReference type="GO" id="GO:0005576">
    <property type="term" value="C:extracellular region"/>
    <property type="evidence" value="ECO:0007669"/>
    <property type="project" value="UniProtKB-SubCell"/>
</dbReference>
<dbReference type="GO" id="GO:0090729">
    <property type="term" value="F:toxin activity"/>
    <property type="evidence" value="ECO:0007669"/>
    <property type="project" value="UniProtKB-KW"/>
</dbReference>
<comment type="function">
    <text evidence="1">Chi-conotoxins inhibit the neuronal noradrenaline transporter (NET/SLC6A2).</text>
</comment>
<comment type="subcellular location">
    <subcellularLocation>
        <location evidence="2">Secreted</location>
    </subcellularLocation>
</comment>
<comment type="tissue specificity">
    <text evidence="4">Expressed by the venom duct.</text>
</comment>
<comment type="domain">
    <text evidence="3">The cysteine framework is X (CC-CX[hydroxyPro]C).</text>
</comment>
<comment type="similarity">
    <text evidence="3">Belongs to the conotoxin T superfamily.</text>
</comment>
<protein>
    <recommendedName>
        <fullName>Chi-conotoxin-like Ar1311</fullName>
    </recommendedName>
</protein>